<comment type="function">
    <text evidence="1">Essential for recycling GMP and indirectly, cGMP.</text>
</comment>
<comment type="catalytic activity">
    <reaction evidence="1">
        <text>GMP + ATP = GDP + ADP</text>
        <dbReference type="Rhea" id="RHEA:20780"/>
        <dbReference type="ChEBI" id="CHEBI:30616"/>
        <dbReference type="ChEBI" id="CHEBI:58115"/>
        <dbReference type="ChEBI" id="CHEBI:58189"/>
        <dbReference type="ChEBI" id="CHEBI:456216"/>
        <dbReference type="EC" id="2.7.4.8"/>
    </reaction>
</comment>
<comment type="subcellular location">
    <subcellularLocation>
        <location evidence="1">Cytoplasm</location>
    </subcellularLocation>
</comment>
<comment type="similarity">
    <text evidence="1">Belongs to the guanylate kinase family.</text>
</comment>
<accession>Q2J840</accession>
<organism>
    <name type="scientific">Frankia casuarinae (strain DSM 45818 / CECT 9043 / HFP020203 / CcI3)</name>
    <dbReference type="NCBI Taxonomy" id="106370"/>
    <lineage>
        <taxon>Bacteria</taxon>
        <taxon>Bacillati</taxon>
        <taxon>Actinomycetota</taxon>
        <taxon>Actinomycetes</taxon>
        <taxon>Frankiales</taxon>
        <taxon>Frankiaceae</taxon>
        <taxon>Frankia</taxon>
    </lineage>
</organism>
<feature type="chain" id="PRO_0000266328" description="Guanylate kinase">
    <location>
        <begin position="1"/>
        <end position="184"/>
    </location>
</feature>
<feature type="domain" description="Guanylate kinase-like" evidence="1">
    <location>
        <begin position="4"/>
        <end position="182"/>
    </location>
</feature>
<feature type="binding site" evidence="1">
    <location>
        <begin position="11"/>
        <end position="18"/>
    </location>
    <ligand>
        <name>ATP</name>
        <dbReference type="ChEBI" id="CHEBI:30616"/>
    </ligand>
</feature>
<protein>
    <recommendedName>
        <fullName evidence="1">Guanylate kinase</fullName>
        <ecNumber evidence="1">2.7.4.8</ecNumber>
    </recommendedName>
    <alternativeName>
        <fullName evidence="1">GMP kinase</fullName>
    </alternativeName>
</protein>
<proteinExistence type="inferred from homology"/>
<name>KGUA_FRACC</name>
<dbReference type="EC" id="2.7.4.8" evidence="1"/>
<dbReference type="EMBL" id="CP000249">
    <property type="protein sequence ID" value="ABD12552.1"/>
    <property type="molecule type" value="Genomic_DNA"/>
</dbReference>
<dbReference type="SMR" id="Q2J840"/>
<dbReference type="STRING" id="106370.Francci3_3195"/>
<dbReference type="KEGG" id="fra:Francci3_3195"/>
<dbReference type="eggNOG" id="COG0194">
    <property type="taxonomic scope" value="Bacteria"/>
</dbReference>
<dbReference type="HOGENOM" id="CLU_001715_1_1_11"/>
<dbReference type="PhylomeDB" id="Q2J840"/>
<dbReference type="Proteomes" id="UP000001937">
    <property type="component" value="Chromosome"/>
</dbReference>
<dbReference type="GO" id="GO:0005829">
    <property type="term" value="C:cytosol"/>
    <property type="evidence" value="ECO:0007669"/>
    <property type="project" value="TreeGrafter"/>
</dbReference>
<dbReference type="GO" id="GO:0005524">
    <property type="term" value="F:ATP binding"/>
    <property type="evidence" value="ECO:0007669"/>
    <property type="project" value="UniProtKB-UniRule"/>
</dbReference>
<dbReference type="GO" id="GO:0004385">
    <property type="term" value="F:guanylate kinase activity"/>
    <property type="evidence" value="ECO:0007669"/>
    <property type="project" value="UniProtKB-UniRule"/>
</dbReference>
<dbReference type="CDD" id="cd00071">
    <property type="entry name" value="GMPK"/>
    <property type="match status" value="1"/>
</dbReference>
<dbReference type="FunFam" id="3.30.63.10:FF:000002">
    <property type="entry name" value="Guanylate kinase 1"/>
    <property type="match status" value="1"/>
</dbReference>
<dbReference type="Gene3D" id="3.30.63.10">
    <property type="entry name" value="Guanylate Kinase phosphate binding domain"/>
    <property type="match status" value="1"/>
</dbReference>
<dbReference type="Gene3D" id="3.40.50.300">
    <property type="entry name" value="P-loop containing nucleotide triphosphate hydrolases"/>
    <property type="match status" value="1"/>
</dbReference>
<dbReference type="HAMAP" id="MF_00328">
    <property type="entry name" value="Guanylate_kinase"/>
    <property type="match status" value="1"/>
</dbReference>
<dbReference type="InterPro" id="IPR008145">
    <property type="entry name" value="GK/Ca_channel_bsu"/>
</dbReference>
<dbReference type="InterPro" id="IPR008144">
    <property type="entry name" value="Guanylate_kin-like_dom"/>
</dbReference>
<dbReference type="InterPro" id="IPR017665">
    <property type="entry name" value="Guanylate_kinase"/>
</dbReference>
<dbReference type="InterPro" id="IPR020590">
    <property type="entry name" value="Guanylate_kinase_CS"/>
</dbReference>
<dbReference type="InterPro" id="IPR027417">
    <property type="entry name" value="P-loop_NTPase"/>
</dbReference>
<dbReference type="NCBIfam" id="TIGR03263">
    <property type="entry name" value="guanyl_kin"/>
    <property type="match status" value="1"/>
</dbReference>
<dbReference type="PANTHER" id="PTHR23117:SF13">
    <property type="entry name" value="GUANYLATE KINASE"/>
    <property type="match status" value="1"/>
</dbReference>
<dbReference type="PANTHER" id="PTHR23117">
    <property type="entry name" value="GUANYLATE KINASE-RELATED"/>
    <property type="match status" value="1"/>
</dbReference>
<dbReference type="Pfam" id="PF00625">
    <property type="entry name" value="Guanylate_kin"/>
    <property type="match status" value="1"/>
</dbReference>
<dbReference type="SMART" id="SM00072">
    <property type="entry name" value="GuKc"/>
    <property type="match status" value="1"/>
</dbReference>
<dbReference type="SUPFAM" id="SSF52540">
    <property type="entry name" value="P-loop containing nucleoside triphosphate hydrolases"/>
    <property type="match status" value="1"/>
</dbReference>
<dbReference type="PROSITE" id="PS00856">
    <property type="entry name" value="GUANYLATE_KINASE_1"/>
    <property type="match status" value="1"/>
</dbReference>
<dbReference type="PROSITE" id="PS50052">
    <property type="entry name" value="GUANYLATE_KINASE_2"/>
    <property type="match status" value="1"/>
</dbReference>
<sequence length="184" mass="20089">MVPMGLTVLSGPSGVGKDTVVAAVRERHPEVWVSVSATTRPPRPGETDGVEYHFVDAEEFARMVKAGEFVEHAMFAGHAYGTPRRPLLERLAAGVPCLLEIELLGARQVRSAMPQARFVFLAPPTFDELVRRLTGRGTESPEVIARRLDRARIELAAETEFDDVIVNDDVRSAAARLVALMIGS</sequence>
<evidence type="ECO:0000255" key="1">
    <source>
        <dbReference type="HAMAP-Rule" id="MF_00328"/>
    </source>
</evidence>
<keyword id="KW-0067">ATP-binding</keyword>
<keyword id="KW-0963">Cytoplasm</keyword>
<keyword id="KW-0418">Kinase</keyword>
<keyword id="KW-0547">Nucleotide-binding</keyword>
<keyword id="KW-1185">Reference proteome</keyword>
<keyword id="KW-0808">Transferase</keyword>
<gene>
    <name evidence="1" type="primary">gmk</name>
    <name type="ordered locus">Francci3_3195</name>
</gene>
<reference key="1">
    <citation type="journal article" date="2007" name="Genome Res.">
        <title>Genome characteristics of facultatively symbiotic Frankia sp. strains reflect host range and host plant biogeography.</title>
        <authorList>
            <person name="Normand P."/>
            <person name="Lapierre P."/>
            <person name="Tisa L.S."/>
            <person name="Gogarten J.P."/>
            <person name="Alloisio N."/>
            <person name="Bagnarol E."/>
            <person name="Bassi C.A."/>
            <person name="Berry A.M."/>
            <person name="Bickhart D.M."/>
            <person name="Choisne N."/>
            <person name="Couloux A."/>
            <person name="Cournoyer B."/>
            <person name="Cruveiller S."/>
            <person name="Daubin V."/>
            <person name="Demange N."/>
            <person name="Francino M.P."/>
            <person name="Goltsman E."/>
            <person name="Huang Y."/>
            <person name="Kopp O.R."/>
            <person name="Labarre L."/>
            <person name="Lapidus A."/>
            <person name="Lavire C."/>
            <person name="Marechal J."/>
            <person name="Martinez M."/>
            <person name="Mastronunzio J.E."/>
            <person name="Mullin B.C."/>
            <person name="Niemann J."/>
            <person name="Pujic P."/>
            <person name="Rawnsley T."/>
            <person name="Rouy Z."/>
            <person name="Schenowitz C."/>
            <person name="Sellstedt A."/>
            <person name="Tavares F."/>
            <person name="Tomkins J.P."/>
            <person name="Vallenet D."/>
            <person name="Valverde C."/>
            <person name="Wall L.G."/>
            <person name="Wang Y."/>
            <person name="Medigue C."/>
            <person name="Benson D.R."/>
        </authorList>
    </citation>
    <scope>NUCLEOTIDE SEQUENCE [LARGE SCALE GENOMIC DNA]</scope>
    <source>
        <strain>DSM 45818 / CECT 9043 / HFP020203 / CcI3</strain>
    </source>
</reference>